<dbReference type="EC" id="3.4.24.-" evidence="1"/>
<dbReference type="EMBL" id="AE017262">
    <property type="protein sequence ID" value="AAT03761.1"/>
    <property type="molecule type" value="Genomic_DNA"/>
</dbReference>
<dbReference type="RefSeq" id="WP_003726181.1">
    <property type="nucleotide sequence ID" value="NC_002973.6"/>
</dbReference>
<dbReference type="KEGG" id="lmf:LMOf2365_0983"/>
<dbReference type="HOGENOM" id="CLU_042266_2_1_9"/>
<dbReference type="GO" id="GO:0005886">
    <property type="term" value="C:plasma membrane"/>
    <property type="evidence" value="ECO:0007669"/>
    <property type="project" value="UniProtKB-SubCell"/>
</dbReference>
<dbReference type="GO" id="GO:0004222">
    <property type="term" value="F:metalloendopeptidase activity"/>
    <property type="evidence" value="ECO:0007669"/>
    <property type="project" value="UniProtKB-UniRule"/>
</dbReference>
<dbReference type="GO" id="GO:0008270">
    <property type="term" value="F:zinc ion binding"/>
    <property type="evidence" value="ECO:0007669"/>
    <property type="project" value="UniProtKB-UniRule"/>
</dbReference>
<dbReference type="GO" id="GO:0006508">
    <property type="term" value="P:proteolysis"/>
    <property type="evidence" value="ECO:0007669"/>
    <property type="project" value="UniProtKB-KW"/>
</dbReference>
<dbReference type="CDD" id="cd07340">
    <property type="entry name" value="M48B_Htpx_like"/>
    <property type="match status" value="1"/>
</dbReference>
<dbReference type="Gene3D" id="3.30.2010.10">
    <property type="entry name" value="Metalloproteases ('zincins'), catalytic domain"/>
    <property type="match status" value="1"/>
</dbReference>
<dbReference type="HAMAP" id="MF_00188">
    <property type="entry name" value="Pept_M48_protease_HtpX"/>
    <property type="match status" value="1"/>
</dbReference>
<dbReference type="InterPro" id="IPR050083">
    <property type="entry name" value="HtpX_protease"/>
</dbReference>
<dbReference type="InterPro" id="IPR022919">
    <property type="entry name" value="Pept_M48_protease_HtpX"/>
</dbReference>
<dbReference type="InterPro" id="IPR001915">
    <property type="entry name" value="Peptidase_M48"/>
</dbReference>
<dbReference type="NCBIfam" id="NF003425">
    <property type="entry name" value="PRK04897.1"/>
    <property type="match status" value="1"/>
</dbReference>
<dbReference type="PANTHER" id="PTHR43221">
    <property type="entry name" value="PROTEASE HTPX"/>
    <property type="match status" value="1"/>
</dbReference>
<dbReference type="PANTHER" id="PTHR43221:SF1">
    <property type="entry name" value="PROTEASE HTPX"/>
    <property type="match status" value="1"/>
</dbReference>
<dbReference type="Pfam" id="PF01435">
    <property type="entry name" value="Peptidase_M48"/>
    <property type="match status" value="1"/>
</dbReference>
<accession>Q721K3</accession>
<protein>
    <recommendedName>
        <fullName evidence="1">Protease HtpX homolog</fullName>
        <ecNumber evidence="1">3.4.24.-</ecNumber>
    </recommendedName>
</protein>
<keyword id="KW-1003">Cell membrane</keyword>
<keyword id="KW-0378">Hydrolase</keyword>
<keyword id="KW-0472">Membrane</keyword>
<keyword id="KW-0479">Metal-binding</keyword>
<keyword id="KW-0482">Metalloprotease</keyword>
<keyword id="KW-0645">Protease</keyword>
<keyword id="KW-0812">Transmembrane</keyword>
<keyword id="KW-1133">Transmembrane helix</keyword>
<keyword id="KW-0862">Zinc</keyword>
<organism>
    <name type="scientific">Listeria monocytogenes serotype 4b (strain F2365)</name>
    <dbReference type="NCBI Taxonomy" id="265669"/>
    <lineage>
        <taxon>Bacteria</taxon>
        <taxon>Bacillati</taxon>
        <taxon>Bacillota</taxon>
        <taxon>Bacilli</taxon>
        <taxon>Bacillales</taxon>
        <taxon>Listeriaceae</taxon>
        <taxon>Listeria</taxon>
    </lineage>
</organism>
<reference key="1">
    <citation type="journal article" date="2004" name="Nucleic Acids Res.">
        <title>Whole genome comparisons of serotype 4b and 1/2a strains of the food-borne pathogen Listeria monocytogenes reveal new insights into the core genome components of this species.</title>
        <authorList>
            <person name="Nelson K.E."/>
            <person name="Fouts D.E."/>
            <person name="Mongodin E.F."/>
            <person name="Ravel J."/>
            <person name="DeBoy R.T."/>
            <person name="Kolonay J.F."/>
            <person name="Rasko D.A."/>
            <person name="Angiuoli S.V."/>
            <person name="Gill S.R."/>
            <person name="Paulsen I.T."/>
            <person name="Peterson J.D."/>
            <person name="White O."/>
            <person name="Nelson W.C."/>
            <person name="Nierman W.C."/>
            <person name="Beanan M.J."/>
            <person name="Brinkac L.M."/>
            <person name="Daugherty S.C."/>
            <person name="Dodson R.J."/>
            <person name="Durkin A.S."/>
            <person name="Madupu R."/>
            <person name="Haft D.H."/>
            <person name="Selengut J."/>
            <person name="Van Aken S.E."/>
            <person name="Khouri H.M."/>
            <person name="Fedorova N."/>
            <person name="Forberger H.A."/>
            <person name="Tran B."/>
            <person name="Kathariou S."/>
            <person name="Wonderling L.D."/>
            <person name="Uhlich G.A."/>
            <person name="Bayles D.O."/>
            <person name="Luchansky J.B."/>
            <person name="Fraser C.M."/>
        </authorList>
    </citation>
    <scope>NUCLEOTIDE SEQUENCE [LARGE SCALE GENOMIC DNA]</scope>
    <source>
        <strain>F2365</strain>
    </source>
</reference>
<proteinExistence type="inferred from homology"/>
<feature type="chain" id="PRO_0000138872" description="Protease HtpX homolog">
    <location>
        <begin position="1"/>
        <end position="304"/>
    </location>
</feature>
<feature type="transmembrane region" description="Helical" evidence="1">
    <location>
        <begin position="14"/>
        <end position="34"/>
    </location>
</feature>
<feature type="transmembrane region" description="Helical" evidence="1">
    <location>
        <begin position="39"/>
        <end position="59"/>
    </location>
</feature>
<feature type="transmembrane region" description="Helical" evidence="1">
    <location>
        <begin position="159"/>
        <end position="179"/>
    </location>
</feature>
<feature type="transmembrane region" description="Helical" evidence="1">
    <location>
        <begin position="202"/>
        <end position="222"/>
    </location>
</feature>
<feature type="active site" evidence="1">
    <location>
        <position position="145"/>
    </location>
</feature>
<feature type="binding site" evidence="1">
    <location>
        <position position="144"/>
    </location>
    <ligand>
        <name>Zn(2+)</name>
        <dbReference type="ChEBI" id="CHEBI:29105"/>
        <note>catalytic</note>
    </ligand>
</feature>
<feature type="binding site" evidence="1">
    <location>
        <position position="148"/>
    </location>
    <ligand>
        <name>Zn(2+)</name>
        <dbReference type="ChEBI" id="CHEBI:29105"/>
        <note>catalytic</note>
    </ligand>
</feature>
<feature type="binding site" evidence="1">
    <location>
        <position position="231"/>
    </location>
    <ligand>
        <name>Zn(2+)</name>
        <dbReference type="ChEBI" id="CHEBI:29105"/>
        <note>catalytic</note>
    </ligand>
</feature>
<sequence length="304" mass="33119">MLFEQIAANKRKTIFIILGFFIFVLMVGAAIGIIVWNNYLNGLILAAVIGAFYILIMVMSSSSVVMAMNHAKEVTSKDQAPVLWDTVESMAMVAGIPMPKVYIVEDASPNAFATGISPEKGAVAVTRGLLNKLERYELEGVIAHEISHIRNYDIRLSTIAIALVAVIAILSDLAMRMIFWGSLTGGRNNRKSDNNNSGGAQAIIYIVALIFVILAPIIATAIQFALSRNREYLADASAVELTRNPDGLIQALQKISGDSKKMEEVSASSESIYFASPLKSKKNKPGLFDSHPPISSRIERLENM</sequence>
<evidence type="ECO:0000255" key="1">
    <source>
        <dbReference type="HAMAP-Rule" id="MF_00188"/>
    </source>
</evidence>
<gene>
    <name evidence="1" type="primary">htpX</name>
    <name type="ordered locus">LMOf2365_0983</name>
</gene>
<comment type="cofactor">
    <cofactor evidence="1">
        <name>Zn(2+)</name>
        <dbReference type="ChEBI" id="CHEBI:29105"/>
    </cofactor>
    <text evidence="1">Binds 1 zinc ion per subunit.</text>
</comment>
<comment type="subcellular location">
    <subcellularLocation>
        <location evidence="1">Cell membrane</location>
        <topology evidence="1">Multi-pass membrane protein</topology>
    </subcellularLocation>
</comment>
<comment type="similarity">
    <text evidence="1">Belongs to the peptidase M48B family.</text>
</comment>
<name>HTPX_LISMF</name>